<feature type="chain" id="PRO_0000261950" description="Nucleotide-binding protein MAP_4063c">
    <location>
        <begin position="1"/>
        <end position="163"/>
    </location>
</feature>
<dbReference type="EMBL" id="AE016958">
    <property type="protein sequence ID" value="AAS06613.1"/>
    <property type="molecule type" value="Genomic_DNA"/>
</dbReference>
<dbReference type="RefSeq" id="WP_010950218.1">
    <property type="nucleotide sequence ID" value="NZ_CP106873.1"/>
</dbReference>
<dbReference type="SMR" id="Q73SL0"/>
<dbReference type="STRING" id="262316.MAP_4063c"/>
<dbReference type="KEGG" id="mpa:MAP_4063c"/>
<dbReference type="PATRIC" id="fig|262316.17.peg.4328"/>
<dbReference type="eggNOG" id="COG1666">
    <property type="taxonomic scope" value="Bacteria"/>
</dbReference>
<dbReference type="HOGENOM" id="CLU_099839_0_0_11"/>
<dbReference type="Proteomes" id="UP000000580">
    <property type="component" value="Chromosome"/>
</dbReference>
<dbReference type="GO" id="GO:0005829">
    <property type="term" value="C:cytosol"/>
    <property type="evidence" value="ECO:0007669"/>
    <property type="project" value="TreeGrafter"/>
</dbReference>
<dbReference type="GO" id="GO:0000166">
    <property type="term" value="F:nucleotide binding"/>
    <property type="evidence" value="ECO:0007669"/>
    <property type="project" value="TreeGrafter"/>
</dbReference>
<dbReference type="CDD" id="cd11740">
    <property type="entry name" value="YajQ_like"/>
    <property type="match status" value="1"/>
</dbReference>
<dbReference type="FunFam" id="3.30.70.860:FF:000004">
    <property type="entry name" value="UPF0234 protein AWC22_11905"/>
    <property type="match status" value="1"/>
</dbReference>
<dbReference type="FunFam" id="3.30.70.990:FF:000003">
    <property type="entry name" value="UPF0234 protein MIP_06774"/>
    <property type="match status" value="1"/>
</dbReference>
<dbReference type="Gene3D" id="3.30.70.860">
    <property type="match status" value="1"/>
</dbReference>
<dbReference type="Gene3D" id="3.30.70.990">
    <property type="entry name" value="YajQ-like, domain 2"/>
    <property type="match status" value="1"/>
</dbReference>
<dbReference type="HAMAP" id="MF_00632">
    <property type="entry name" value="YajQ"/>
    <property type="match status" value="1"/>
</dbReference>
<dbReference type="InterPro" id="IPR007551">
    <property type="entry name" value="DUF520"/>
</dbReference>
<dbReference type="InterPro" id="IPR035571">
    <property type="entry name" value="UPF0234-like_C"/>
</dbReference>
<dbReference type="InterPro" id="IPR035570">
    <property type="entry name" value="UPF0234_N"/>
</dbReference>
<dbReference type="InterPro" id="IPR036183">
    <property type="entry name" value="YajQ-like_sf"/>
</dbReference>
<dbReference type="NCBIfam" id="NF003819">
    <property type="entry name" value="PRK05412.1"/>
    <property type="match status" value="1"/>
</dbReference>
<dbReference type="PANTHER" id="PTHR30476">
    <property type="entry name" value="UPF0234 PROTEIN YAJQ"/>
    <property type="match status" value="1"/>
</dbReference>
<dbReference type="PANTHER" id="PTHR30476:SF0">
    <property type="entry name" value="UPF0234 PROTEIN YAJQ"/>
    <property type="match status" value="1"/>
</dbReference>
<dbReference type="Pfam" id="PF04461">
    <property type="entry name" value="DUF520"/>
    <property type="match status" value="1"/>
</dbReference>
<dbReference type="SUPFAM" id="SSF89963">
    <property type="entry name" value="YajQ-like"/>
    <property type="match status" value="2"/>
</dbReference>
<evidence type="ECO:0000255" key="1">
    <source>
        <dbReference type="HAMAP-Rule" id="MF_00632"/>
    </source>
</evidence>
<sequence length="163" mass="18013">MADSSFDIVSKVDRQEVDNALNQAAKELATRFDFRGTDTTIAWKGDEAIELTSSTGERVKAAVDVFKEKLIRRDISMKAFDAGEPQASGKTYKVNGTLKQGISSESAKKITKLIRDEGPKGVKTQIQGDEIRVSSKKRDDLQAVIAMLKQADLDVALQFVNYR</sequence>
<protein>
    <recommendedName>
        <fullName evidence="1">Nucleotide-binding protein MAP_4063c</fullName>
    </recommendedName>
</protein>
<comment type="function">
    <text evidence="1">Nucleotide-binding protein.</text>
</comment>
<comment type="similarity">
    <text evidence="1">Belongs to the YajQ family.</text>
</comment>
<gene>
    <name type="ordered locus">MAP_4063c</name>
</gene>
<accession>Q73SL0</accession>
<name>Y4063_MYCPA</name>
<organism>
    <name type="scientific">Mycolicibacterium paratuberculosis (strain ATCC BAA-968 / K-10)</name>
    <name type="common">Mycobacterium paratuberculosis</name>
    <dbReference type="NCBI Taxonomy" id="262316"/>
    <lineage>
        <taxon>Bacteria</taxon>
        <taxon>Bacillati</taxon>
        <taxon>Actinomycetota</taxon>
        <taxon>Actinomycetes</taxon>
        <taxon>Mycobacteriales</taxon>
        <taxon>Mycobacteriaceae</taxon>
        <taxon>Mycobacterium</taxon>
        <taxon>Mycobacterium avium complex (MAC)</taxon>
    </lineage>
</organism>
<reference key="1">
    <citation type="journal article" date="2005" name="Proc. Natl. Acad. Sci. U.S.A.">
        <title>The complete genome sequence of Mycobacterium avium subspecies paratuberculosis.</title>
        <authorList>
            <person name="Li L."/>
            <person name="Bannantine J.P."/>
            <person name="Zhang Q."/>
            <person name="Amonsin A."/>
            <person name="May B.J."/>
            <person name="Alt D."/>
            <person name="Banerji N."/>
            <person name="Kanjilal S."/>
            <person name="Kapur V."/>
        </authorList>
    </citation>
    <scope>NUCLEOTIDE SEQUENCE [LARGE SCALE GENOMIC DNA]</scope>
    <source>
        <strain>ATCC BAA-968 / K-10</strain>
    </source>
</reference>
<proteinExistence type="inferred from homology"/>
<keyword id="KW-0547">Nucleotide-binding</keyword>
<keyword id="KW-1185">Reference proteome</keyword>